<organism>
    <name type="scientific">Burkholderia ambifaria (strain ATCC BAA-244 / DSM 16087 / CCUG 44356 / LMG 19182 / AMMD)</name>
    <name type="common">Burkholderia cepacia (strain AMMD)</name>
    <dbReference type="NCBI Taxonomy" id="339670"/>
    <lineage>
        <taxon>Bacteria</taxon>
        <taxon>Pseudomonadati</taxon>
        <taxon>Pseudomonadota</taxon>
        <taxon>Betaproteobacteria</taxon>
        <taxon>Burkholderiales</taxon>
        <taxon>Burkholderiaceae</taxon>
        <taxon>Burkholderia</taxon>
        <taxon>Burkholderia cepacia complex</taxon>
    </lineage>
</organism>
<name>TAL_BURCM</name>
<sequence length="317" mass="35318">MTTALDQLKQYTTVVADTGDFQQLAQYKPQDATTNPSLILKAVQKDAYKPILEKTVRDHRDESADFIIDRLLIAFGTEILKLIPGRVSTEVDARLSFDTPRSIDKGRELIKLYEDAGIGRERILIKLASTWEGIRAAEVLQKEGIKCNMTLLFSLVQAAASAEAGAQLISPFVGRIYDWYKKQAGADWDEAKNGGANDPGVQSVRRIYTYYKTFGYNTEVMGASFRTTSQITELAGCDLLTISPDLLQKLQDSNDTVERKLSPDALHDKPTERVAIDEASFRFQLNDEAMATEKLAEGIRVFAADAVKLEKLIDSLR</sequence>
<protein>
    <recommendedName>
        <fullName evidence="2">Transaldolase</fullName>
        <ecNumber evidence="2">2.2.1.2</ecNumber>
    </recommendedName>
</protein>
<keyword id="KW-0963">Cytoplasm</keyword>
<keyword id="KW-0570">Pentose shunt</keyword>
<keyword id="KW-0704">Schiff base</keyword>
<keyword id="KW-0808">Transferase</keyword>
<dbReference type="EC" id="2.2.1.2" evidence="2"/>
<dbReference type="EMBL" id="CP000440">
    <property type="protein sequence ID" value="ABI87930.1"/>
    <property type="molecule type" value="Genomic_DNA"/>
</dbReference>
<dbReference type="RefSeq" id="WP_011657553.1">
    <property type="nucleotide sequence ID" value="NC_008390.1"/>
</dbReference>
<dbReference type="SMR" id="Q0BD43"/>
<dbReference type="GeneID" id="93085418"/>
<dbReference type="KEGG" id="bam:Bamb_2374"/>
<dbReference type="PATRIC" id="fig|339670.21.peg.2548"/>
<dbReference type="eggNOG" id="COG0176">
    <property type="taxonomic scope" value="Bacteria"/>
</dbReference>
<dbReference type="UniPathway" id="UPA00115">
    <property type="reaction ID" value="UER00414"/>
</dbReference>
<dbReference type="Proteomes" id="UP000000662">
    <property type="component" value="Chromosome 1"/>
</dbReference>
<dbReference type="GO" id="GO:0005737">
    <property type="term" value="C:cytoplasm"/>
    <property type="evidence" value="ECO:0007669"/>
    <property type="project" value="UniProtKB-SubCell"/>
</dbReference>
<dbReference type="GO" id="GO:0004801">
    <property type="term" value="F:transaldolase activity"/>
    <property type="evidence" value="ECO:0000250"/>
    <property type="project" value="UniProtKB"/>
</dbReference>
<dbReference type="GO" id="GO:0005975">
    <property type="term" value="P:carbohydrate metabolic process"/>
    <property type="evidence" value="ECO:0007669"/>
    <property type="project" value="InterPro"/>
</dbReference>
<dbReference type="GO" id="GO:0006098">
    <property type="term" value="P:pentose-phosphate shunt"/>
    <property type="evidence" value="ECO:0007669"/>
    <property type="project" value="UniProtKB-UniRule"/>
</dbReference>
<dbReference type="CDD" id="cd00957">
    <property type="entry name" value="Transaldolase_TalAB"/>
    <property type="match status" value="1"/>
</dbReference>
<dbReference type="FunFam" id="3.20.20.70:FF:000002">
    <property type="entry name" value="Transaldolase"/>
    <property type="match status" value="1"/>
</dbReference>
<dbReference type="Gene3D" id="3.20.20.70">
    <property type="entry name" value="Aldolase class I"/>
    <property type="match status" value="1"/>
</dbReference>
<dbReference type="HAMAP" id="MF_00492">
    <property type="entry name" value="Transaldolase_1"/>
    <property type="match status" value="1"/>
</dbReference>
<dbReference type="InterPro" id="IPR013785">
    <property type="entry name" value="Aldolase_TIM"/>
</dbReference>
<dbReference type="InterPro" id="IPR001585">
    <property type="entry name" value="TAL/FSA"/>
</dbReference>
<dbReference type="InterPro" id="IPR004730">
    <property type="entry name" value="Transaldolase_1"/>
</dbReference>
<dbReference type="InterPro" id="IPR018225">
    <property type="entry name" value="Transaldolase_AS"/>
</dbReference>
<dbReference type="NCBIfam" id="TIGR00874">
    <property type="entry name" value="talAB"/>
    <property type="match status" value="1"/>
</dbReference>
<dbReference type="PANTHER" id="PTHR10683">
    <property type="entry name" value="TRANSALDOLASE"/>
    <property type="match status" value="1"/>
</dbReference>
<dbReference type="PANTHER" id="PTHR10683:SF18">
    <property type="entry name" value="TRANSALDOLASE"/>
    <property type="match status" value="1"/>
</dbReference>
<dbReference type="Pfam" id="PF00923">
    <property type="entry name" value="TAL_FSA"/>
    <property type="match status" value="1"/>
</dbReference>
<dbReference type="SUPFAM" id="SSF51569">
    <property type="entry name" value="Aldolase"/>
    <property type="match status" value="1"/>
</dbReference>
<dbReference type="PROSITE" id="PS01054">
    <property type="entry name" value="TRANSALDOLASE_1"/>
    <property type="match status" value="1"/>
</dbReference>
<dbReference type="PROSITE" id="PS00958">
    <property type="entry name" value="TRANSALDOLASE_2"/>
    <property type="match status" value="1"/>
</dbReference>
<comment type="function">
    <text evidence="2">Transaldolase is important for the balance of metabolites in the pentose-phosphate pathway.</text>
</comment>
<comment type="catalytic activity">
    <reaction evidence="2">
        <text>D-sedoheptulose 7-phosphate + D-glyceraldehyde 3-phosphate = D-erythrose 4-phosphate + beta-D-fructose 6-phosphate</text>
        <dbReference type="Rhea" id="RHEA:17053"/>
        <dbReference type="ChEBI" id="CHEBI:16897"/>
        <dbReference type="ChEBI" id="CHEBI:57483"/>
        <dbReference type="ChEBI" id="CHEBI:57634"/>
        <dbReference type="ChEBI" id="CHEBI:59776"/>
        <dbReference type="EC" id="2.2.1.2"/>
    </reaction>
</comment>
<comment type="pathway">
    <text evidence="2">Carbohydrate degradation; pentose phosphate pathway; D-glyceraldehyde 3-phosphate and beta-D-fructose 6-phosphate from D-ribose 5-phosphate and D-xylulose 5-phosphate (non-oxidative stage): step 2/3.</text>
</comment>
<comment type="subunit">
    <text evidence="1">Homodimer.</text>
</comment>
<comment type="subcellular location">
    <subcellularLocation>
        <location evidence="2">Cytoplasm</location>
    </subcellularLocation>
</comment>
<comment type="similarity">
    <text evidence="2">Belongs to the transaldolase family. Type 1 subfamily.</text>
</comment>
<evidence type="ECO:0000250" key="1"/>
<evidence type="ECO:0000255" key="2">
    <source>
        <dbReference type="HAMAP-Rule" id="MF_00492"/>
    </source>
</evidence>
<proteinExistence type="inferred from homology"/>
<reference key="1">
    <citation type="submission" date="2006-08" db="EMBL/GenBank/DDBJ databases">
        <title>Complete sequence of chromosome 1 of Burkholderia cepacia AMMD.</title>
        <authorList>
            <person name="Copeland A."/>
            <person name="Lucas S."/>
            <person name="Lapidus A."/>
            <person name="Barry K."/>
            <person name="Detter J.C."/>
            <person name="Glavina del Rio T."/>
            <person name="Hammon N."/>
            <person name="Israni S."/>
            <person name="Pitluck S."/>
            <person name="Bruce D."/>
            <person name="Chain P."/>
            <person name="Malfatti S."/>
            <person name="Shin M."/>
            <person name="Vergez L."/>
            <person name="Schmutz J."/>
            <person name="Larimer F."/>
            <person name="Land M."/>
            <person name="Hauser L."/>
            <person name="Kyrpides N."/>
            <person name="Kim E."/>
            <person name="Parke J."/>
            <person name="Coenye T."/>
            <person name="Konstantinidis K."/>
            <person name="Ramette A."/>
            <person name="Tiedje J."/>
            <person name="Richardson P."/>
        </authorList>
    </citation>
    <scope>NUCLEOTIDE SEQUENCE [LARGE SCALE GENOMIC DNA]</scope>
    <source>
        <strain>ATCC BAA-244 / DSM 16087 / CCUG 44356 / LMG 19182 / AMMD</strain>
    </source>
</reference>
<gene>
    <name evidence="2" type="primary">tal</name>
    <name type="ordered locus">Bamb_2374</name>
</gene>
<accession>Q0BD43</accession>
<feature type="chain" id="PRO_1000014489" description="Transaldolase">
    <location>
        <begin position="1"/>
        <end position="317"/>
    </location>
</feature>
<feature type="active site" description="Schiff-base intermediate with substrate" evidence="2">
    <location>
        <position position="126"/>
    </location>
</feature>